<accession>Q255N7</accession>
<keyword id="KW-0067">ATP-binding</keyword>
<keyword id="KW-0436">Ligase</keyword>
<keyword id="KW-0460">Magnesium</keyword>
<keyword id="KW-0479">Metal-binding</keyword>
<keyword id="KW-0547">Nucleotide-binding</keyword>
<keyword id="KW-0816">Tricarboxylic acid cycle</keyword>
<sequence length="388" mass="42208">MHLHEYQAKDLLSSYDIAIPPYRIVSSVEEGELVLRELGINAGVVKVQVHAGGRGKNGGVIIAKSSSEILAAIGKLLKMRFESNQTSGESLPVEKVLITPLVNIASEYYLAVIMDRKNRCPAIMLSKAGGMDIEEVAQKYPDQLLTVPLTPSARIYNYQLRQIIKFMNWEGDTGKQGVQLIKKLVQCFYDNDASLLEINPLVLTQEEELLVLDAKVTIDDNALYRHPKLEVLYDPSQENVRDVLAKKIGLSYIALDGDIGCLVNGAGLAMSTLDILKIHGGSAANFLDVGGSATEQQIQEAVSLVLSDENVEVLFINIFGGIMDCSAVASGLVAVMQTRENLIPTVVRLEGTNVELGKEIVQRSGIPCQFTDSLNEGARLAVALSKQV</sequence>
<gene>
    <name evidence="1" type="primary">sucC</name>
    <name type="ordered locus">CF0229</name>
</gene>
<organism>
    <name type="scientific">Chlamydia felis (strain Fe/C-56)</name>
    <name type="common">Chlamydophila felis</name>
    <dbReference type="NCBI Taxonomy" id="264202"/>
    <lineage>
        <taxon>Bacteria</taxon>
        <taxon>Pseudomonadati</taxon>
        <taxon>Chlamydiota</taxon>
        <taxon>Chlamydiia</taxon>
        <taxon>Chlamydiales</taxon>
        <taxon>Chlamydiaceae</taxon>
        <taxon>Chlamydia/Chlamydophila group</taxon>
        <taxon>Chlamydia</taxon>
    </lineage>
</organism>
<proteinExistence type="inferred from homology"/>
<comment type="function">
    <text evidence="1">Succinyl-CoA synthetase functions in the citric acid cycle (TCA), coupling the hydrolysis of succinyl-CoA to the synthesis of either ATP or GTP and thus represents the only step of substrate-level phosphorylation in the TCA. The beta subunit provides nucleotide specificity of the enzyme and binds the substrate succinate, while the binding sites for coenzyme A and phosphate are found in the alpha subunit.</text>
</comment>
<comment type="catalytic activity">
    <reaction evidence="1">
        <text>succinate + ATP + CoA = succinyl-CoA + ADP + phosphate</text>
        <dbReference type="Rhea" id="RHEA:17661"/>
        <dbReference type="ChEBI" id="CHEBI:30031"/>
        <dbReference type="ChEBI" id="CHEBI:30616"/>
        <dbReference type="ChEBI" id="CHEBI:43474"/>
        <dbReference type="ChEBI" id="CHEBI:57287"/>
        <dbReference type="ChEBI" id="CHEBI:57292"/>
        <dbReference type="ChEBI" id="CHEBI:456216"/>
        <dbReference type="EC" id="6.2.1.5"/>
    </reaction>
    <physiologicalReaction direction="right-to-left" evidence="1">
        <dbReference type="Rhea" id="RHEA:17663"/>
    </physiologicalReaction>
</comment>
<comment type="catalytic activity">
    <reaction evidence="1">
        <text>GTP + succinate + CoA = succinyl-CoA + GDP + phosphate</text>
        <dbReference type="Rhea" id="RHEA:22120"/>
        <dbReference type="ChEBI" id="CHEBI:30031"/>
        <dbReference type="ChEBI" id="CHEBI:37565"/>
        <dbReference type="ChEBI" id="CHEBI:43474"/>
        <dbReference type="ChEBI" id="CHEBI:57287"/>
        <dbReference type="ChEBI" id="CHEBI:57292"/>
        <dbReference type="ChEBI" id="CHEBI:58189"/>
    </reaction>
    <physiologicalReaction direction="right-to-left" evidence="1">
        <dbReference type="Rhea" id="RHEA:22122"/>
    </physiologicalReaction>
</comment>
<comment type="cofactor">
    <cofactor evidence="1">
        <name>Mg(2+)</name>
        <dbReference type="ChEBI" id="CHEBI:18420"/>
    </cofactor>
    <text evidence="1">Binds 1 Mg(2+) ion per subunit.</text>
</comment>
<comment type="pathway">
    <text evidence="1">Carbohydrate metabolism; tricarboxylic acid cycle; succinate from succinyl-CoA (ligase route): step 1/1.</text>
</comment>
<comment type="subunit">
    <text evidence="1">Heterotetramer of two alpha and two beta subunits.</text>
</comment>
<comment type="similarity">
    <text evidence="1">Belongs to the succinate/malate CoA ligase beta subunit family.</text>
</comment>
<feature type="chain" id="PRO_1000082061" description="Succinate--CoA ligase [ADP-forming] subunit beta">
    <location>
        <begin position="1"/>
        <end position="388"/>
    </location>
</feature>
<feature type="domain" description="ATP-grasp" evidence="1">
    <location>
        <begin position="9"/>
        <end position="244"/>
    </location>
</feature>
<feature type="binding site" evidence="1">
    <location>
        <position position="46"/>
    </location>
    <ligand>
        <name>ATP</name>
        <dbReference type="ChEBI" id="CHEBI:30616"/>
    </ligand>
</feature>
<feature type="binding site" evidence="1">
    <location>
        <begin position="53"/>
        <end position="55"/>
    </location>
    <ligand>
        <name>ATP</name>
        <dbReference type="ChEBI" id="CHEBI:30616"/>
    </ligand>
</feature>
<feature type="binding site" evidence="1">
    <location>
        <position position="102"/>
    </location>
    <ligand>
        <name>ATP</name>
        <dbReference type="ChEBI" id="CHEBI:30616"/>
    </ligand>
</feature>
<feature type="binding site" evidence="1">
    <location>
        <position position="107"/>
    </location>
    <ligand>
        <name>ATP</name>
        <dbReference type="ChEBI" id="CHEBI:30616"/>
    </ligand>
</feature>
<feature type="binding site" evidence="1">
    <location>
        <position position="199"/>
    </location>
    <ligand>
        <name>Mg(2+)</name>
        <dbReference type="ChEBI" id="CHEBI:18420"/>
    </ligand>
</feature>
<feature type="binding site" evidence="1">
    <location>
        <position position="213"/>
    </location>
    <ligand>
        <name>Mg(2+)</name>
        <dbReference type="ChEBI" id="CHEBI:18420"/>
    </ligand>
</feature>
<feature type="binding site" evidence="1">
    <location>
        <position position="264"/>
    </location>
    <ligand>
        <name>substrate</name>
        <note>ligand shared with subunit alpha</note>
    </ligand>
</feature>
<feature type="binding site" evidence="1">
    <location>
        <begin position="321"/>
        <end position="323"/>
    </location>
    <ligand>
        <name>substrate</name>
        <note>ligand shared with subunit alpha</note>
    </ligand>
</feature>
<dbReference type="EC" id="6.2.1.5" evidence="1"/>
<dbReference type="EMBL" id="AP006861">
    <property type="protein sequence ID" value="BAE81001.1"/>
    <property type="molecule type" value="Genomic_DNA"/>
</dbReference>
<dbReference type="RefSeq" id="WP_011457783.1">
    <property type="nucleotide sequence ID" value="NC_007899.1"/>
</dbReference>
<dbReference type="SMR" id="Q255N7"/>
<dbReference type="STRING" id="264202.CF0229"/>
<dbReference type="KEGG" id="cfe:CF0229"/>
<dbReference type="eggNOG" id="COG0045">
    <property type="taxonomic scope" value="Bacteria"/>
</dbReference>
<dbReference type="HOGENOM" id="CLU_037430_0_2_0"/>
<dbReference type="OrthoDB" id="9802602at2"/>
<dbReference type="UniPathway" id="UPA00223">
    <property type="reaction ID" value="UER00999"/>
</dbReference>
<dbReference type="Proteomes" id="UP000001260">
    <property type="component" value="Chromosome"/>
</dbReference>
<dbReference type="GO" id="GO:0005829">
    <property type="term" value="C:cytosol"/>
    <property type="evidence" value="ECO:0007669"/>
    <property type="project" value="TreeGrafter"/>
</dbReference>
<dbReference type="GO" id="GO:0042709">
    <property type="term" value="C:succinate-CoA ligase complex"/>
    <property type="evidence" value="ECO:0007669"/>
    <property type="project" value="TreeGrafter"/>
</dbReference>
<dbReference type="GO" id="GO:0005524">
    <property type="term" value="F:ATP binding"/>
    <property type="evidence" value="ECO:0007669"/>
    <property type="project" value="UniProtKB-UniRule"/>
</dbReference>
<dbReference type="GO" id="GO:0000287">
    <property type="term" value="F:magnesium ion binding"/>
    <property type="evidence" value="ECO:0007669"/>
    <property type="project" value="UniProtKB-UniRule"/>
</dbReference>
<dbReference type="GO" id="GO:0004775">
    <property type="term" value="F:succinate-CoA ligase (ADP-forming) activity"/>
    <property type="evidence" value="ECO:0007669"/>
    <property type="project" value="UniProtKB-UniRule"/>
</dbReference>
<dbReference type="GO" id="GO:0004776">
    <property type="term" value="F:succinate-CoA ligase (GDP-forming) activity"/>
    <property type="evidence" value="ECO:0007669"/>
    <property type="project" value="RHEA"/>
</dbReference>
<dbReference type="GO" id="GO:0006104">
    <property type="term" value="P:succinyl-CoA metabolic process"/>
    <property type="evidence" value="ECO:0007669"/>
    <property type="project" value="TreeGrafter"/>
</dbReference>
<dbReference type="GO" id="GO:0006099">
    <property type="term" value="P:tricarboxylic acid cycle"/>
    <property type="evidence" value="ECO:0007669"/>
    <property type="project" value="UniProtKB-UniRule"/>
</dbReference>
<dbReference type="FunFam" id="3.30.470.20:FF:000002">
    <property type="entry name" value="Succinate--CoA ligase [ADP-forming] subunit beta"/>
    <property type="match status" value="1"/>
</dbReference>
<dbReference type="FunFam" id="3.40.50.261:FF:000001">
    <property type="entry name" value="Succinate--CoA ligase [ADP-forming] subunit beta"/>
    <property type="match status" value="1"/>
</dbReference>
<dbReference type="Gene3D" id="3.30.1490.20">
    <property type="entry name" value="ATP-grasp fold, A domain"/>
    <property type="match status" value="1"/>
</dbReference>
<dbReference type="Gene3D" id="3.30.470.20">
    <property type="entry name" value="ATP-grasp fold, B domain"/>
    <property type="match status" value="1"/>
</dbReference>
<dbReference type="Gene3D" id="3.40.50.261">
    <property type="entry name" value="Succinyl-CoA synthetase domains"/>
    <property type="match status" value="1"/>
</dbReference>
<dbReference type="HAMAP" id="MF_00558">
    <property type="entry name" value="Succ_CoA_beta"/>
    <property type="match status" value="1"/>
</dbReference>
<dbReference type="InterPro" id="IPR011761">
    <property type="entry name" value="ATP-grasp"/>
</dbReference>
<dbReference type="InterPro" id="IPR013650">
    <property type="entry name" value="ATP-grasp_succ-CoA_synth-type"/>
</dbReference>
<dbReference type="InterPro" id="IPR013815">
    <property type="entry name" value="ATP_grasp_subdomain_1"/>
</dbReference>
<dbReference type="InterPro" id="IPR017866">
    <property type="entry name" value="Succ-CoA_synthase_bsu_CS"/>
</dbReference>
<dbReference type="InterPro" id="IPR005811">
    <property type="entry name" value="SUCC_ACL_C"/>
</dbReference>
<dbReference type="InterPro" id="IPR005809">
    <property type="entry name" value="Succ_CoA_ligase-like_bsu"/>
</dbReference>
<dbReference type="InterPro" id="IPR016102">
    <property type="entry name" value="Succinyl-CoA_synth-like"/>
</dbReference>
<dbReference type="NCBIfam" id="NF001913">
    <property type="entry name" value="PRK00696.1"/>
    <property type="match status" value="1"/>
</dbReference>
<dbReference type="NCBIfam" id="TIGR01016">
    <property type="entry name" value="sucCoAbeta"/>
    <property type="match status" value="1"/>
</dbReference>
<dbReference type="PANTHER" id="PTHR11815:SF10">
    <property type="entry name" value="SUCCINATE--COA LIGASE [GDP-FORMING] SUBUNIT BETA, MITOCHONDRIAL"/>
    <property type="match status" value="1"/>
</dbReference>
<dbReference type="PANTHER" id="PTHR11815">
    <property type="entry name" value="SUCCINYL-COA SYNTHETASE BETA CHAIN"/>
    <property type="match status" value="1"/>
</dbReference>
<dbReference type="Pfam" id="PF08442">
    <property type="entry name" value="ATP-grasp_2"/>
    <property type="match status" value="1"/>
</dbReference>
<dbReference type="Pfam" id="PF00549">
    <property type="entry name" value="Ligase_CoA"/>
    <property type="match status" value="1"/>
</dbReference>
<dbReference type="PIRSF" id="PIRSF001554">
    <property type="entry name" value="SucCS_beta"/>
    <property type="match status" value="1"/>
</dbReference>
<dbReference type="SUPFAM" id="SSF56059">
    <property type="entry name" value="Glutathione synthetase ATP-binding domain-like"/>
    <property type="match status" value="1"/>
</dbReference>
<dbReference type="SUPFAM" id="SSF52210">
    <property type="entry name" value="Succinyl-CoA synthetase domains"/>
    <property type="match status" value="1"/>
</dbReference>
<dbReference type="PROSITE" id="PS50975">
    <property type="entry name" value="ATP_GRASP"/>
    <property type="match status" value="1"/>
</dbReference>
<dbReference type="PROSITE" id="PS01217">
    <property type="entry name" value="SUCCINYL_COA_LIG_3"/>
    <property type="match status" value="1"/>
</dbReference>
<reference key="1">
    <citation type="journal article" date="2006" name="DNA Res.">
        <title>Genome sequence of the cat pathogen, Chlamydophila felis.</title>
        <authorList>
            <person name="Azuma Y."/>
            <person name="Hirakawa H."/>
            <person name="Yamashita A."/>
            <person name="Cai Y."/>
            <person name="Rahman M.A."/>
            <person name="Suzuki H."/>
            <person name="Mitaku S."/>
            <person name="Toh H."/>
            <person name="Goto S."/>
            <person name="Murakami T."/>
            <person name="Sugi K."/>
            <person name="Hayashi H."/>
            <person name="Fukushi H."/>
            <person name="Hattori M."/>
            <person name="Kuhara S."/>
            <person name="Shirai M."/>
        </authorList>
    </citation>
    <scope>NUCLEOTIDE SEQUENCE [LARGE SCALE GENOMIC DNA]</scope>
    <source>
        <strain>Fe/C-56</strain>
    </source>
</reference>
<evidence type="ECO:0000255" key="1">
    <source>
        <dbReference type="HAMAP-Rule" id="MF_00558"/>
    </source>
</evidence>
<protein>
    <recommendedName>
        <fullName evidence="1">Succinate--CoA ligase [ADP-forming] subunit beta</fullName>
        <ecNumber evidence="1">6.2.1.5</ecNumber>
    </recommendedName>
    <alternativeName>
        <fullName evidence="1">Succinyl-CoA synthetase subunit beta</fullName>
        <shortName evidence="1">SCS-beta</shortName>
    </alternativeName>
</protein>
<name>SUCC_CHLFF</name>